<name>RL32_MYCBP</name>
<comment type="similarity">
    <text evidence="1">Belongs to the bacterial ribosomal protein bL32 family.</text>
</comment>
<proteinExistence type="inferred from homology"/>
<sequence>MAVPKRRKSRSNTRSRRSQWKAAKTELVGVTVAGHAHKVPRRLLKAARLGLIDFDKR</sequence>
<keyword id="KW-0687">Ribonucleoprotein</keyword>
<keyword id="KW-0689">Ribosomal protein</keyword>
<dbReference type="EMBL" id="AM408590">
    <property type="protein sequence ID" value="CAL71021.1"/>
    <property type="molecule type" value="Genomic_DNA"/>
</dbReference>
<dbReference type="RefSeq" id="WP_003405053.1">
    <property type="nucleotide sequence ID" value="NC_008769.1"/>
</dbReference>
<dbReference type="SMR" id="A1KHB5"/>
<dbReference type="GeneID" id="45424948"/>
<dbReference type="KEGG" id="mbb:BCG_1034"/>
<dbReference type="HOGENOM" id="CLU_203263_0_0_11"/>
<dbReference type="Proteomes" id="UP000001472">
    <property type="component" value="Chromosome"/>
</dbReference>
<dbReference type="GO" id="GO:0015934">
    <property type="term" value="C:large ribosomal subunit"/>
    <property type="evidence" value="ECO:0007669"/>
    <property type="project" value="InterPro"/>
</dbReference>
<dbReference type="GO" id="GO:0003735">
    <property type="term" value="F:structural constituent of ribosome"/>
    <property type="evidence" value="ECO:0007669"/>
    <property type="project" value="InterPro"/>
</dbReference>
<dbReference type="GO" id="GO:0006412">
    <property type="term" value="P:translation"/>
    <property type="evidence" value="ECO:0007669"/>
    <property type="project" value="UniProtKB-UniRule"/>
</dbReference>
<dbReference type="HAMAP" id="MF_00340">
    <property type="entry name" value="Ribosomal_bL32"/>
    <property type="match status" value="1"/>
</dbReference>
<dbReference type="InterPro" id="IPR002677">
    <property type="entry name" value="Ribosomal_bL32"/>
</dbReference>
<dbReference type="InterPro" id="IPR011332">
    <property type="entry name" value="Ribosomal_zn-bd"/>
</dbReference>
<dbReference type="NCBIfam" id="TIGR01031">
    <property type="entry name" value="rpmF_bact"/>
    <property type="match status" value="1"/>
</dbReference>
<dbReference type="Pfam" id="PF01783">
    <property type="entry name" value="Ribosomal_L32p"/>
    <property type="match status" value="1"/>
</dbReference>
<dbReference type="SUPFAM" id="SSF57829">
    <property type="entry name" value="Zn-binding ribosomal proteins"/>
    <property type="match status" value="1"/>
</dbReference>
<protein>
    <recommendedName>
        <fullName evidence="1">Large ribosomal subunit protein bL32</fullName>
    </recommendedName>
    <alternativeName>
        <fullName evidence="3">50S ribosomal protein L32</fullName>
    </alternativeName>
</protein>
<accession>A1KHB5</accession>
<feature type="chain" id="PRO_0000296504" description="Large ribosomal subunit protein bL32">
    <location>
        <begin position="1"/>
        <end position="57"/>
    </location>
</feature>
<feature type="region of interest" description="Disordered" evidence="2">
    <location>
        <begin position="1"/>
        <end position="22"/>
    </location>
</feature>
<feature type="compositionally biased region" description="Basic residues" evidence="2">
    <location>
        <begin position="1"/>
        <end position="19"/>
    </location>
</feature>
<gene>
    <name evidence="1" type="primary">rpmF</name>
    <name type="ordered locus">BCG_1034</name>
</gene>
<organism>
    <name type="scientific">Mycobacterium bovis (strain BCG / Pasteur 1173P2)</name>
    <dbReference type="NCBI Taxonomy" id="410289"/>
    <lineage>
        <taxon>Bacteria</taxon>
        <taxon>Bacillati</taxon>
        <taxon>Actinomycetota</taxon>
        <taxon>Actinomycetes</taxon>
        <taxon>Mycobacteriales</taxon>
        <taxon>Mycobacteriaceae</taxon>
        <taxon>Mycobacterium</taxon>
        <taxon>Mycobacterium tuberculosis complex</taxon>
    </lineage>
</organism>
<evidence type="ECO:0000255" key="1">
    <source>
        <dbReference type="HAMAP-Rule" id="MF_00340"/>
    </source>
</evidence>
<evidence type="ECO:0000256" key="2">
    <source>
        <dbReference type="SAM" id="MobiDB-lite"/>
    </source>
</evidence>
<evidence type="ECO:0000305" key="3"/>
<reference key="1">
    <citation type="journal article" date="2007" name="Proc. Natl. Acad. Sci. U.S.A.">
        <title>Genome plasticity of BCG and impact on vaccine efficacy.</title>
        <authorList>
            <person name="Brosch R."/>
            <person name="Gordon S.V."/>
            <person name="Garnier T."/>
            <person name="Eiglmeier K."/>
            <person name="Frigui W."/>
            <person name="Valenti P."/>
            <person name="Dos Santos S."/>
            <person name="Duthoy S."/>
            <person name="Lacroix C."/>
            <person name="Garcia-Pelayo C."/>
            <person name="Inwald J.K."/>
            <person name="Golby P."/>
            <person name="Garcia J.N."/>
            <person name="Hewinson R.G."/>
            <person name="Behr M.A."/>
            <person name="Quail M.A."/>
            <person name="Churcher C."/>
            <person name="Barrell B.G."/>
            <person name="Parkhill J."/>
            <person name="Cole S.T."/>
        </authorList>
    </citation>
    <scope>NUCLEOTIDE SEQUENCE [LARGE SCALE GENOMIC DNA]</scope>
    <source>
        <strain>BCG / Pasteur 1173P2</strain>
    </source>
</reference>